<organism>
    <name type="scientific">Hepatitis E virus genotype 1 (isolate Human/Burma)</name>
    <name type="common">HEV-1</name>
    <dbReference type="NCBI Taxonomy" id="31767"/>
    <lineage>
        <taxon>Viruses</taxon>
        <taxon>Riboviria</taxon>
        <taxon>Orthornavirae</taxon>
        <taxon>Kitrinoviricota</taxon>
        <taxon>Alsuviricetes</taxon>
        <taxon>Hepelivirales</taxon>
        <taxon>Hepeviridae</taxon>
        <taxon>Orthohepevirinae</taxon>
        <taxon>Paslahepevirus</taxon>
        <taxon>Hepatitis E virus</taxon>
    </lineage>
</organism>
<sequence>MRPRPILLLLLMFLPMLPAPPPGQPSGRRRGRRSGGSGGGFWGDRVDSQPFAIPYIHPTNPFAPDVTAAAGAGPRVRQPARPLGSAWRDQAQRPAVASRRRPTTAGAAPLTAVAPAHDTPPVPDVDSRGAILRRQYNLSTSPLTSSVATGTNLVLYAAPLSPLLPLQDGTNTHIMATEASNYAQYRVARATIRYRPLVPNAVGGYAISISFWPQTTTTPTSVDMNSITSTDVRILVQPGIASELVIPSERLHYRNQGWRSVETSGVAEEEATSGLVMLCIHGSLVNSYTNTPYTGALGLLDFALELEFRNLTPGNTNTRVSRYSSTARHRLRRGADGTAELTTTAATRFMKDLYFTSTNGVGEIGRGIALTLFNLADTLLGGLPTELISSAGGQLFYSRPVVSANGEPTVKLYTSVENAQQDKGIAIPHDIDLGESRVVIQDYDNQHEQDRPTPSPAPSRPFSVLRANDVLWLSLTAAEYDQSTYGSSTGPVYVSDSVTLVNVATGAQAVARSLDWTKVTLDGRPLSTIQQYSKTFFVLPLRGKLSFWEAGTTKAGYPYNYNTTASDQLLVENAAGHRVAISTYTTSLGAGPVSISAVAVLAPHSALALLEDTLDYPARAHTFDDFCPECRPLGLQGCAFQSTVAELQRLKMKVGKTREL</sequence>
<dbReference type="EMBL" id="M73218">
    <property type="protein sequence ID" value="AAA45736.1"/>
    <property type="molecule type" value="Genomic_RNA"/>
</dbReference>
<dbReference type="PIR" id="C40778">
    <property type="entry name" value="VHWWH2"/>
</dbReference>
<dbReference type="PDB" id="2ZZQ">
    <property type="method" value="X-ray"/>
    <property type="resolution" value="3.81 A"/>
    <property type="chains" value="A=112-608"/>
</dbReference>
<dbReference type="PDBsum" id="2ZZQ"/>
<dbReference type="SMR" id="P29326"/>
<dbReference type="ABCD" id="P29326">
    <property type="antibodies" value="1 sequenced antibody"/>
</dbReference>
<dbReference type="EvolutionaryTrace" id="P29326"/>
<dbReference type="Proteomes" id="UP000007243">
    <property type="component" value="Segment"/>
</dbReference>
<dbReference type="GO" id="GO:0005576">
    <property type="term" value="C:extracellular region"/>
    <property type="evidence" value="ECO:0007669"/>
    <property type="project" value="UniProtKB-SubCell"/>
</dbReference>
<dbReference type="GO" id="GO:0044165">
    <property type="term" value="C:host cell endoplasmic reticulum"/>
    <property type="evidence" value="ECO:0007669"/>
    <property type="project" value="UniProtKB-SubCell"/>
</dbReference>
<dbReference type="GO" id="GO:0044177">
    <property type="term" value="C:host cell Golgi apparatus"/>
    <property type="evidence" value="ECO:0007669"/>
    <property type="project" value="UniProtKB-SubCell"/>
</dbReference>
<dbReference type="GO" id="GO:0042025">
    <property type="term" value="C:host cell nucleus"/>
    <property type="evidence" value="ECO:0007669"/>
    <property type="project" value="UniProtKB-SubCell"/>
</dbReference>
<dbReference type="GO" id="GO:0044228">
    <property type="term" value="C:host cell surface"/>
    <property type="evidence" value="ECO:0007669"/>
    <property type="project" value="UniProtKB-SubCell"/>
</dbReference>
<dbReference type="GO" id="GO:0039615">
    <property type="term" value="C:T=1 icosahedral viral capsid"/>
    <property type="evidence" value="ECO:0007669"/>
    <property type="project" value="UniProtKB-KW"/>
</dbReference>
<dbReference type="GO" id="GO:0003723">
    <property type="term" value="F:RNA binding"/>
    <property type="evidence" value="ECO:0007669"/>
    <property type="project" value="UniProtKB-KW"/>
</dbReference>
<dbReference type="GO" id="GO:0005198">
    <property type="term" value="F:structural molecule activity"/>
    <property type="evidence" value="ECO:0007669"/>
    <property type="project" value="InterPro"/>
</dbReference>
<dbReference type="GO" id="GO:0098670">
    <property type="term" value="P:entry receptor-mediated virion attachment to host cell"/>
    <property type="evidence" value="ECO:0007669"/>
    <property type="project" value="UniProtKB-KW"/>
</dbReference>
<dbReference type="GO" id="GO:0046718">
    <property type="term" value="P:symbiont entry into host cell"/>
    <property type="evidence" value="ECO:0007669"/>
    <property type="project" value="UniProtKB-KW"/>
</dbReference>
<dbReference type="FunFam" id="2.40.30.190:FF:000001">
    <property type="entry name" value="Secreted protein ORF2"/>
    <property type="match status" value="1"/>
</dbReference>
<dbReference type="FunFam" id="2.60.120.20:FF:000010">
    <property type="entry name" value="Secreted protein ORF2"/>
    <property type="match status" value="1"/>
</dbReference>
<dbReference type="Gene3D" id="2.40.30.190">
    <property type="match status" value="1"/>
</dbReference>
<dbReference type="Gene3D" id="2.60.120.20">
    <property type="match status" value="1"/>
</dbReference>
<dbReference type="InterPro" id="IPR048794">
    <property type="entry name" value="SP2_C"/>
</dbReference>
<dbReference type="InterPro" id="IPR048802">
    <property type="entry name" value="SP2_M"/>
</dbReference>
<dbReference type="InterPro" id="IPR004261">
    <property type="entry name" value="SP2_N"/>
</dbReference>
<dbReference type="InterPro" id="IPR029053">
    <property type="entry name" value="Viral_coat"/>
</dbReference>
<dbReference type="Pfam" id="PF03014">
    <property type="entry name" value="SP2"/>
    <property type="match status" value="1"/>
</dbReference>
<dbReference type="Pfam" id="PF20752">
    <property type="entry name" value="SP2_C"/>
    <property type="match status" value="1"/>
</dbReference>
<dbReference type="Pfam" id="PF20751">
    <property type="entry name" value="SP2_M"/>
    <property type="match status" value="1"/>
</dbReference>
<dbReference type="SUPFAM" id="SSF88633">
    <property type="entry name" value="Positive stranded ssRNA viruses"/>
    <property type="match status" value="1"/>
</dbReference>
<evidence type="ECO:0000250" key="1">
    <source>
        <dbReference type="UniProtKB" id="P33426"/>
    </source>
</evidence>
<evidence type="ECO:0000250" key="2">
    <source>
        <dbReference type="UniProtKB" id="Q68985"/>
    </source>
</evidence>
<evidence type="ECO:0000250" key="3">
    <source>
        <dbReference type="UniProtKB" id="Q81871"/>
    </source>
</evidence>
<evidence type="ECO:0000250" key="4">
    <source>
        <dbReference type="UniProtKB" id="Q9YLQ9"/>
    </source>
</evidence>
<evidence type="ECO:0000255" key="5"/>
<evidence type="ECO:0000256" key="6">
    <source>
        <dbReference type="SAM" id="MobiDB-lite"/>
    </source>
</evidence>
<evidence type="ECO:0000269" key="7">
    <source>
    </source>
</evidence>
<evidence type="ECO:0000269" key="8">
    <source>
    </source>
</evidence>
<evidence type="ECO:0000305" key="9"/>
<proteinExistence type="evidence at protein level"/>
<name>CAPSD_HEVBU</name>
<gene>
    <name type="ORF">ORF2</name>
</gene>
<keyword id="KW-0002">3D-structure</keyword>
<keyword id="KW-0024">Alternative initiation</keyword>
<keyword id="KW-0167">Capsid protein</keyword>
<keyword id="KW-0325">Glycoprotein</keyword>
<keyword id="KW-1035">Host cytoplasm</keyword>
<keyword id="KW-1038">Host endoplasmic reticulum</keyword>
<keyword id="KW-1040">Host Golgi apparatus</keyword>
<keyword id="KW-1048">Host nucleus</keyword>
<keyword id="KW-0945">Host-virus interaction</keyword>
<keyword id="KW-0694">RNA-binding</keyword>
<keyword id="KW-0964">Secreted</keyword>
<keyword id="KW-0732">Signal</keyword>
<keyword id="KW-1140">T=1 icosahedral capsid protein</keyword>
<keyword id="KW-1161">Viral attachment to host cell</keyword>
<keyword id="KW-1234">Viral attachment to host entry receptor</keyword>
<keyword id="KW-0946">Virion</keyword>
<keyword id="KW-1160">Virus entry into host cell</keyword>
<feature type="signal peptide" evidence="5">
    <location>
        <begin position="1"/>
        <end position="19"/>
    </location>
</feature>
<feature type="chain" id="PRO_0000445485" description="Pro-secreted protein ORF2" evidence="5">
    <location>
        <begin position="20"/>
        <end position="660"/>
    </location>
</feature>
<feature type="chain" id="PRO_0000456928" description="Secreted protein ORF2" evidence="1">
    <location>
        <begin position="34"/>
        <end position="660"/>
    </location>
</feature>
<feature type="region of interest" description="Disordered" evidence="6">
    <location>
        <begin position="18"/>
        <end position="43"/>
    </location>
</feature>
<feature type="region of interest" description="Disordered" evidence="6">
    <location>
        <begin position="66"/>
        <end position="127"/>
    </location>
</feature>
<feature type="region of interest" description="particle formation" evidence="8">
    <location>
        <begin position="368"/>
        <end position="394"/>
    </location>
</feature>
<feature type="region of interest" description="Oligomerization" evidence="8">
    <location>
        <begin position="585"/>
        <end position="610"/>
    </location>
</feature>
<feature type="short sequence motif" description="Nuclear localization signal" evidence="1">
    <location>
        <begin position="28"/>
        <end position="33"/>
    </location>
</feature>
<feature type="compositionally biased region" description="Low complexity" evidence="6">
    <location>
        <begin position="103"/>
        <end position="116"/>
    </location>
</feature>
<feature type="site" description="Cleavage" evidence="1">
    <location>
        <begin position="33"/>
        <end position="34"/>
    </location>
</feature>
<feature type="site" description="Possible cleavage" evidence="3">
    <location>
        <begin position="578"/>
        <end position="579"/>
    </location>
</feature>
<feature type="site" description="Possible cleavage" evidence="3">
    <location>
        <begin position="601"/>
        <end position="602"/>
    </location>
</feature>
<feature type="glycosylation site" description="N-linked (GlcNAc...) asparagine; by host" evidence="2">
    <location>
        <position position="137"/>
    </location>
</feature>
<feature type="glycosylation site" description="N-linked (GlcNAc...) asparagine; by host" evidence="2">
    <location>
        <position position="310"/>
    </location>
</feature>
<feature type="glycosylation site" description="N-linked (GlcNAc...) asparagine; by host" evidence="2">
    <location>
        <position position="562"/>
    </location>
</feature>
<feature type="splice variant" id="VSP_059885" description="In isoform Capsid protein.">
    <location>
        <begin position="1"/>
        <end position="15"/>
    </location>
</feature>
<feature type="mutagenesis site" description="Complete loss of dimeric interactions." evidence="8">
    <original>A</original>
    <variation>E</variation>
    <location>
        <position position="597"/>
    </location>
</feature>
<feature type="mutagenesis site" description="Complete loss of dimeric interactions." evidence="8">
    <original>V</original>
    <variation>E</variation>
    <location>
        <position position="598"/>
    </location>
</feature>
<feature type="mutagenesis site" description="Complete loss of dimeric interactions." evidence="8">
    <original>A</original>
    <variation>E</variation>
    <location>
        <position position="599"/>
    </location>
</feature>
<feature type="mutagenesis site" description="Decreased amount of dimeric form." evidence="8">
    <original>V</original>
    <variation>E</variation>
    <location>
        <position position="600"/>
    </location>
</feature>
<feature type="mutagenesis site" description="Complete loss of dimeric interactions." evidence="8">
    <original>L</original>
    <variation>E</variation>
    <location>
        <position position="601"/>
    </location>
</feature>
<feature type="mutagenesis site" description="Complete loss of dimeric interactions." evidence="8">
    <original>A</original>
    <variation>E</variation>
    <location>
        <position position="602"/>
    </location>
</feature>
<protein>
    <recommendedName>
        <fullName>Pro-secreted protein ORF2</fullName>
    </recommendedName>
    <alternativeName>
        <fullName>Protein ORF2</fullName>
        <shortName>pORF2</shortName>
    </alternativeName>
    <component>
        <recommendedName>
            <fullName>Secreted protein ORF2</fullName>
            <shortName>ORF2s</shortName>
        </recommendedName>
    </component>
</protein>
<accession>P29326</accession>
<comment type="function">
    <molecule>Isoform Secreted protein ORF2</molecule>
    <text evidence="4">Plays a role in the inhibition of host antibody-mediated neutralization without blocking viral cell entry.</text>
</comment>
<comment type="function">
    <molecule>Isoform Capsid protein</molecule>
    <text evidence="1 3 7 8">Forms an icosahedral capsid with a T=1 symmetry and a 34 nm diameter. The capsid is composed of 60 copies linked to each other. Binds to the 5' end of the genomic RNA to mediate genome encapsidation (PubMed:14671114, PubMed:15557331). Binds to heparin surface proteoglycans (HSPGs) to mediate viral entry (By similarity). Additionally, the interactions with host ASGR1 and ASGR2 facilitate viral infection of hepatocytes (By similarity). Inhibits IFN production by blocking host TBK1-induced IRF3 phosphorylation (By similarity). The nuclear form probably modulates host gene expression (By similarity).</text>
</comment>
<comment type="subunit">
    <molecule>Isoform Secreted protein ORF2</molecule>
    <text evidence="4">Homodimer.</text>
</comment>
<comment type="subunit">
    <molecule>Isoform Capsid protein</molecule>
    <text evidence="2 3">Self-assembles to form the capsid. The capsid is dominated by dimers that define the 30 morphological units. Interacts with phosphorylated protein ORF3 (By similarity). Interacts with host TMEM134. Interacts with host ASGR1 and ASGR2; these interactions facilitate infection of host hepatocytes (By similarity).</text>
</comment>
<comment type="subcellular location">
    <molecule>Isoform Secreted protein ORF2</molecule>
    <subcellularLocation>
        <location evidence="3">Secreted</location>
    </subcellularLocation>
    <text evidence="2 4">Cotranslationally translocated into the ER (By similarity). Translation from the first AUG produces a full-length protein with a signal peptide that can direct the protein into the secretory pathway (By similarity).</text>
</comment>
<comment type="subcellular location">
    <molecule>Isoform Capsid protein</molecule>
    <subcellularLocation>
        <location evidence="3">Virion</location>
    </subcellularLocation>
    <subcellularLocation>
        <location evidence="3">Host cytoplasm</location>
    </subcellularLocation>
    <subcellularLocation>
        <location evidence="3">Host endoplasmic reticulum</location>
    </subcellularLocation>
    <subcellularLocation>
        <location evidence="3">Host Golgi apparatus</location>
    </subcellularLocation>
    <subcellularLocation>
        <location evidence="2">Host cell surface</location>
    </subcellularLocation>
    <subcellularLocation>
        <location evidence="3">Host nucleus</location>
    </subcellularLocation>
    <text evidence="1 3 4">Translation from the internal AUG codon disrupts the signal sequence, producing a cytoplasmic protein that is responsible for virion assembly (By similarity). Shuttles between cytoplasm and nucleus (By similarity). This isoform is found in quasi-enveloped virions (By similarity).</text>
</comment>
<comment type="alternative products">
    <event type="alternative initiation"/>
    <isoform>
        <id>P29326-1</id>
        <name>Secreted protein ORF2</name>
        <name>ORF2s</name>
        <name>ORF2g</name>
        <sequence type="displayed"/>
    </isoform>
    <isoform>
        <id>P29326-2</id>
        <name>Capsid protein</name>
        <name>ORF2c</name>
        <name>ORF2i</name>
        <sequence type="described" ref="VSP_059885"/>
    </isoform>
</comment>
<comment type="domain">
    <text evidence="1">The Arginine-Rich Motif (ARM) acts as a nuclear localization signal that drives the nuclear translocation of isoform capsid protein. This motif has also been linked to the inhibition of host IRF3 phosphorylation.</text>
</comment>
<comment type="PTM">
    <molecule>Pro-secreted protein ORF2</molecule>
    <text evidence="1">Cleaved by host protease in the N-terminus.</text>
</comment>
<comment type="PTM">
    <molecule>Isoform Secreted protein ORF2</molecule>
    <text evidence="3">N-glycosylated.</text>
</comment>
<comment type="PTM">
    <molecule>Isoform Capsid protein</molecule>
    <text evidence="3">Not N-glycosylated. The C-terminus of the capsid protein ORF2 is truncated in non-enveloped virions shedded in feces, probably due to host proteases.</text>
</comment>
<comment type="miscellaneous">
    <text evidence="3">The viral particles present in feces and bile are non-enveloped, while those in circulating blood and culture supernatants are covered with a cellular membrane (quasi-enveloped).</text>
</comment>
<comment type="similarity">
    <text evidence="9">Belongs to the hepevirus capsid protein family.</text>
</comment>
<organismHost>
    <name type="scientific">Homo sapiens</name>
    <name type="common">Human</name>
    <dbReference type="NCBI Taxonomy" id="9606"/>
</organismHost>
<reference key="1">
    <citation type="journal article" date="1991" name="Virology">
        <title>Hepatitis E virus (HEV): molecular cloning and sequencing of the full-length viral genome.</title>
        <authorList>
            <person name="Tam A.W."/>
            <person name="Smith M.M."/>
            <person name="Guerra M.E."/>
            <person name="Huang C.-C."/>
            <person name="Bradley D.W."/>
            <person name="Fry K.E."/>
            <person name="Reyes G.R."/>
        </authorList>
    </citation>
    <scope>NUCLEOTIDE SEQUENCE [GENOMIC RNA]</scope>
</reference>
<reference key="2">
    <citation type="journal article" date="1999" name="Virology">
        <title>Recombinant hepatitis E capsid protein self-assembles into a dual-domain T = 1 particle presenting native virus epitopes.</title>
        <authorList>
            <person name="Xing L."/>
            <person name="Kato K."/>
            <person name="Li T."/>
            <person name="Takeda N."/>
            <person name="Miyamura T."/>
            <person name="Hammar L."/>
            <person name="Cheng R.H."/>
        </authorList>
    </citation>
    <scope>STRUCTURE BY ELECTRON MICROSCOPY OF CAPSID SHELL</scope>
    <scope>SUBUNIT (ISOFORM CAPSID PROTEIN ORF2)</scope>
</reference>
<reference key="3">
    <citation type="journal article" date="2004" name="J. Virol.">
        <title>The ORF2 protein of hepatitis E virus binds the 5' region of viral RNA.</title>
        <authorList>
            <person name="Surjit M."/>
            <person name="Jameel S."/>
            <person name="Lal S.K."/>
        </authorList>
    </citation>
    <scope>FUNCTION (ISOFORM CAPSID PROTEIN ORF2)</scope>
    <scope>RNA-BINDING (ISOFORM CAPSID PROTEIN ORF2)</scope>
</reference>
<reference key="4">
    <citation type="journal article" date="2005" name="J. Biol. Chem.">
        <title>Mutational analysis of essential interactions involved in the assembly of hepatitis E virus capsid.</title>
        <authorList>
            <person name="Li S.-W."/>
            <person name="Zhang J."/>
            <person name="He Z.-Q."/>
            <person name="Gu Y."/>
            <person name="Liu R.-S."/>
            <person name="Lin J."/>
            <person name="Chen Y.-X."/>
            <person name="Ng M.H."/>
            <person name="Xia N.-S."/>
        </authorList>
    </citation>
    <scope>FUNCTION (ISOFORM CAPSID PROTEIN ORF2)</scope>
    <scope>SUBUNIT (ISOFORM CAPSID PROTEIN ORF2)</scope>
    <scope>MUTAGENESIS OF ALA-597; VAL-598; ALA-599; VAL-600; LEU-601 AND ALA-602</scope>
</reference>